<sequence length="472" mass="51575">MLRVGPLTIGTLDDWAPSTGSTVSWRPSAVAHTKASQAPISDVPVSYMQAQHIRGYCEQKAKGLDYSRLMVVSCQQPGQCDIRAANYVINAHLRRHDTYRSWFQYNGNGQIIRRTIQDPADIEFVPVHHGELTLPQIREIVQNTPDPLQWGCFRFGIVQGCDHFTFFASVDHVHVDAMIVGVTLMEFHLMYAALVGGHAPLELPPAGSYDDFCRRQHTFSSTLTVESPQVRAWTKFAEGTNGSFPDFPLPLGDPSKPSDADIVTVMMLDEEQTAQFESVCTAAGARFIGGVLACCGLAEHELTGTTTYYGLTPRDTRRTPADAMTQGWFTGLIPITVPIAGSAFGDAARAAQTSFDSGVKLAEVPYDRVVELSSTLTMPRPNFPVVNFLDAGAAPLSVLLTAELTGTNIGVYSDGRYSYQLSIYVIRVEQGTAVAVMFPDNPIARESVARYLATLKSVFQRVAESGQQQNVA</sequence>
<proteinExistence type="evidence at protein level"/>
<dbReference type="EC" id="2.3.1.278" evidence="1"/>
<dbReference type="EC" id="2.3.1.279" evidence="1"/>
<dbReference type="EMBL" id="AL123456">
    <property type="protein sequence ID" value="CCP43938.1"/>
    <property type="molecule type" value="Genomic_DNA"/>
</dbReference>
<dbReference type="PIR" id="F70876">
    <property type="entry name" value="F70876"/>
</dbReference>
<dbReference type="RefSeq" id="NP_215698.1">
    <property type="nucleotide sequence ID" value="NC_000962.3"/>
</dbReference>
<dbReference type="RefSeq" id="WP_003898759.1">
    <property type="nucleotide sequence ID" value="NZ_NVQJ01000025.1"/>
</dbReference>
<dbReference type="SMR" id="P9WIK5"/>
<dbReference type="FunCoup" id="P9WIK5">
    <property type="interactions" value="2"/>
</dbReference>
<dbReference type="STRING" id="83332.Rv1182"/>
<dbReference type="SwissLipids" id="SLP:000001028"/>
<dbReference type="PaxDb" id="83332-Rv1182"/>
<dbReference type="DNASU" id="886072"/>
<dbReference type="GeneID" id="45425153"/>
<dbReference type="GeneID" id="886072"/>
<dbReference type="KEGG" id="mtu:Rv1182"/>
<dbReference type="KEGG" id="mtv:RVBD_1182"/>
<dbReference type="PATRIC" id="fig|83332.111.peg.1322"/>
<dbReference type="TubercuList" id="Rv1182"/>
<dbReference type="eggNOG" id="COG1020">
    <property type="taxonomic scope" value="Bacteria"/>
</dbReference>
<dbReference type="InParanoid" id="P9WIK5"/>
<dbReference type="OrthoDB" id="9123229at2"/>
<dbReference type="PhylomeDB" id="P9WIK5"/>
<dbReference type="BioCyc" id="MetaCyc:G185E-5351-MONOMER"/>
<dbReference type="BRENDA" id="2.3.1.278">
    <property type="organism ID" value="3445"/>
</dbReference>
<dbReference type="BRENDA" id="2.3.1.279">
    <property type="organism ID" value="3445"/>
</dbReference>
<dbReference type="Proteomes" id="UP000001584">
    <property type="component" value="Chromosome"/>
</dbReference>
<dbReference type="GO" id="GO:0016020">
    <property type="term" value="C:membrane"/>
    <property type="evidence" value="ECO:0007669"/>
    <property type="project" value="GOC"/>
</dbReference>
<dbReference type="GO" id="GO:0016409">
    <property type="term" value="F:palmitoyltransferase activity"/>
    <property type="evidence" value="ECO:0000314"/>
    <property type="project" value="MTBBASE"/>
</dbReference>
<dbReference type="GO" id="GO:0009247">
    <property type="term" value="P:glycolipid biosynthetic process"/>
    <property type="evidence" value="ECO:0000314"/>
    <property type="project" value="MTBBASE"/>
</dbReference>
<dbReference type="GO" id="GO:0005991">
    <property type="term" value="P:trehalose metabolic process"/>
    <property type="evidence" value="ECO:0000314"/>
    <property type="project" value="MTBBASE"/>
</dbReference>
<dbReference type="FunFam" id="3.30.559.10:FF:000022">
    <property type="entry name" value="Trehalose-2-sulfate acyltransferase papA2"/>
    <property type="match status" value="1"/>
</dbReference>
<dbReference type="FunFam" id="3.30.559.30:FF:000007">
    <property type="entry name" value="Trehalose-2-sulfate acyltransferase papA2"/>
    <property type="match status" value="1"/>
</dbReference>
<dbReference type="Gene3D" id="3.30.559.10">
    <property type="entry name" value="Chloramphenicol acetyltransferase-like domain"/>
    <property type="match status" value="1"/>
</dbReference>
<dbReference type="Gene3D" id="3.30.559.30">
    <property type="entry name" value="Nonribosomal peptide synthetase, condensation domain"/>
    <property type="match status" value="1"/>
</dbReference>
<dbReference type="InterPro" id="IPR023213">
    <property type="entry name" value="CAT-like_dom_sf"/>
</dbReference>
<dbReference type="InterPro" id="IPR001242">
    <property type="entry name" value="Condensatn"/>
</dbReference>
<dbReference type="Pfam" id="PF00668">
    <property type="entry name" value="Condensation"/>
    <property type="match status" value="1"/>
</dbReference>
<dbReference type="SUPFAM" id="SSF52777">
    <property type="entry name" value="CoA-dependent acyltransferases"/>
    <property type="match status" value="2"/>
</dbReference>
<evidence type="ECO:0000269" key="1">
    <source>
    </source>
</evidence>
<evidence type="ECO:0000305" key="2"/>
<keyword id="KW-0012">Acyltransferase</keyword>
<keyword id="KW-1185">Reference proteome</keyword>
<keyword id="KW-0808">Transferase</keyword>
<protein>
    <recommendedName>
        <fullName evidence="2">Acyltransferase PapA3</fullName>
        <ecNumber evidence="1">2.3.1.278</ecNumber>
        <ecNumber evidence="1">2.3.1.279</ecNumber>
    </recommendedName>
    <alternativeName>
        <fullName evidence="2">Long-chain-acyl-CoA--trehalose acyltransferase</fullName>
    </alternativeName>
    <alternativeName>
        <fullName evidence="2">Mycolipenoyl-CoA--2-(long-chain-fatty acyl)-trehalose mycolipenoyltransferase</fullName>
    </alternativeName>
    <alternativeName>
        <fullName>Polyketide synthase-associated protein A3</fullName>
    </alternativeName>
</protein>
<gene>
    <name type="primary">papA3</name>
    <name type="ordered locus">Rv1182</name>
</gene>
<comment type="function">
    <text evidence="1">Involved in the biosynthesis of polyacyltrehalose (PAT), a pentaacylated, trehalose-based glycolipid that could have a role in anchoring the bacterial capsule. Catalyzes the sequential transfer of two palmitoyl groups onto a single glucose residue of trehalose generating the diacylated product 2,3-diacyltrehalose (trehalose dipalmitate). Although palmitoyl-CoA (PCoA) seems to be the physiological acyl donor, PapA3 can also use docosanoyl (22-carbon saturated fatty acid) coenzyme A as acyl donor.</text>
</comment>
<comment type="catalytic activity">
    <reaction evidence="1">
        <text>a long-chain fatty acyl-CoA + alpha,alpha-trehalose = a 2-O-(long-chain fatty acyl)-alpha,alpha-trehalose + CoA</text>
        <dbReference type="Rhea" id="RHEA:58044"/>
        <dbReference type="ChEBI" id="CHEBI:16551"/>
        <dbReference type="ChEBI" id="CHEBI:57287"/>
        <dbReference type="ChEBI" id="CHEBI:83139"/>
        <dbReference type="ChEBI" id="CHEBI:142477"/>
        <dbReference type="EC" id="2.3.1.279"/>
    </reaction>
    <physiologicalReaction direction="left-to-right" evidence="1">
        <dbReference type="Rhea" id="RHEA:58045"/>
    </physiologicalReaction>
</comment>
<comment type="catalytic activity">
    <reaction evidence="1">
        <text>a mycolipenoyl-CoA + a 2-O-(long-chain fatty acyl)-alpha,alpha-trehalose = a 2-O-(long-chain fatty acyl)-3-O-mycolipenoyl-trehalose + CoA</text>
        <dbReference type="Rhea" id="RHEA:38459"/>
        <dbReference type="ChEBI" id="CHEBI:57287"/>
        <dbReference type="ChEBI" id="CHEBI:142475"/>
        <dbReference type="ChEBI" id="CHEBI:142476"/>
        <dbReference type="ChEBI" id="CHEBI:142477"/>
        <dbReference type="EC" id="2.3.1.278"/>
    </reaction>
    <physiologicalReaction direction="left-to-right" evidence="1">
        <dbReference type="Rhea" id="RHEA:38460"/>
    </physiologicalReaction>
</comment>
<comment type="catalytic activity">
    <reaction evidence="1">
        <text>alpha,alpha-trehalose + hexadecanoyl-CoA = 2-O-hexadecanoyl-alpha,alpha-trehalose + CoA</text>
        <dbReference type="Rhea" id="RHEA:44052"/>
        <dbReference type="ChEBI" id="CHEBI:16551"/>
        <dbReference type="ChEBI" id="CHEBI:57287"/>
        <dbReference type="ChEBI" id="CHEBI:57379"/>
        <dbReference type="ChEBI" id="CHEBI:84041"/>
    </reaction>
    <physiologicalReaction direction="left-to-right" evidence="1">
        <dbReference type="Rhea" id="RHEA:44053"/>
    </physiologicalReaction>
</comment>
<comment type="catalytic activity">
    <reaction evidence="1">
        <text>2-O-hexadecanoyl-alpha,alpha-trehalose + hexadecanoyl-CoA = 2-O,3-O-dihexadecanoyl-alpha,alpha-trehalose + CoA</text>
        <dbReference type="Rhea" id="RHEA:44056"/>
        <dbReference type="ChEBI" id="CHEBI:57287"/>
        <dbReference type="ChEBI" id="CHEBI:57379"/>
        <dbReference type="ChEBI" id="CHEBI:84041"/>
        <dbReference type="ChEBI" id="CHEBI:84042"/>
    </reaction>
    <physiologicalReaction direction="left-to-right" evidence="1">
        <dbReference type="Rhea" id="RHEA:44057"/>
    </physiologicalReaction>
</comment>
<comment type="mass spectrometry" mass="51809.0" method="Electrospray" evidence="1"/>
<comment type="disruption phenotype">
    <text evidence="1">Deletion of the gene prevents PAT synthesis.</text>
</comment>
<comment type="similarity">
    <text evidence="2">Belongs to the PapA acyltransferase family.</text>
</comment>
<feature type="chain" id="PRO_0000420764" description="Acyltransferase PapA3">
    <location>
        <begin position="1"/>
        <end position="472"/>
    </location>
</feature>
<accession>P9WIK5</accession>
<accession>F2GG06</accession>
<accession>L0T8W4</accession>
<accession>O50438</accession>
<accession>Q7D8P1</accession>
<name>PAPA3_MYCTU</name>
<organism>
    <name type="scientific">Mycobacterium tuberculosis (strain ATCC 25618 / H37Rv)</name>
    <dbReference type="NCBI Taxonomy" id="83332"/>
    <lineage>
        <taxon>Bacteria</taxon>
        <taxon>Bacillati</taxon>
        <taxon>Actinomycetota</taxon>
        <taxon>Actinomycetes</taxon>
        <taxon>Mycobacteriales</taxon>
        <taxon>Mycobacteriaceae</taxon>
        <taxon>Mycobacterium</taxon>
        <taxon>Mycobacterium tuberculosis complex</taxon>
    </lineage>
</organism>
<reference key="1">
    <citation type="journal article" date="1998" name="Nature">
        <title>Deciphering the biology of Mycobacterium tuberculosis from the complete genome sequence.</title>
        <authorList>
            <person name="Cole S.T."/>
            <person name="Brosch R."/>
            <person name="Parkhill J."/>
            <person name="Garnier T."/>
            <person name="Churcher C.M."/>
            <person name="Harris D.E."/>
            <person name="Gordon S.V."/>
            <person name="Eiglmeier K."/>
            <person name="Gas S."/>
            <person name="Barry C.E. III"/>
            <person name="Tekaia F."/>
            <person name="Badcock K."/>
            <person name="Basham D."/>
            <person name="Brown D."/>
            <person name="Chillingworth T."/>
            <person name="Connor R."/>
            <person name="Davies R.M."/>
            <person name="Devlin K."/>
            <person name="Feltwell T."/>
            <person name="Gentles S."/>
            <person name="Hamlin N."/>
            <person name="Holroyd S."/>
            <person name="Hornsby T."/>
            <person name="Jagels K."/>
            <person name="Krogh A."/>
            <person name="McLean J."/>
            <person name="Moule S."/>
            <person name="Murphy L.D."/>
            <person name="Oliver S."/>
            <person name="Osborne J."/>
            <person name="Quail M.A."/>
            <person name="Rajandream M.A."/>
            <person name="Rogers J."/>
            <person name="Rutter S."/>
            <person name="Seeger K."/>
            <person name="Skelton S."/>
            <person name="Squares S."/>
            <person name="Squares R."/>
            <person name="Sulston J.E."/>
            <person name="Taylor K."/>
            <person name="Whitehead S."/>
            <person name="Barrell B.G."/>
        </authorList>
    </citation>
    <scope>NUCLEOTIDE SEQUENCE [LARGE SCALE GENOMIC DNA]</scope>
    <source>
        <strain>ATCC 25618 / H37Rv</strain>
    </source>
</reference>
<reference key="2">
    <citation type="journal article" date="2009" name="J. Biol. Chem.">
        <title>PapA3 is an acyltransferase required for polyacyltrehalose biosynthesis in Mycobacterium tuberculosis.</title>
        <authorList>
            <person name="Hatzios S.K."/>
            <person name="Schelle M.W."/>
            <person name="Holsclaw C.M."/>
            <person name="Behrens C.R."/>
            <person name="Botyanszki Z."/>
            <person name="Lin F.L."/>
            <person name="Carlson B.L."/>
            <person name="Kumar P."/>
            <person name="Leary J.A."/>
            <person name="Bertozzi C.R."/>
        </authorList>
    </citation>
    <scope>FUNCTION</scope>
    <scope>CATALYTIC ACTIVITY</scope>
    <scope>MASS SPECTROMETRY</scope>
    <scope>DISRUPTION PHENOTYPE</scope>
    <scope>SUBSTRATE SPECIFICITY</scope>
</reference>
<reference key="3">
    <citation type="journal article" date="2011" name="Mol. Cell. Proteomics">
        <title>Proteogenomic analysis of Mycobacterium tuberculosis by high resolution mass spectrometry.</title>
        <authorList>
            <person name="Kelkar D.S."/>
            <person name="Kumar D."/>
            <person name="Kumar P."/>
            <person name="Balakrishnan L."/>
            <person name="Muthusamy B."/>
            <person name="Yadav A.K."/>
            <person name="Shrivastava P."/>
            <person name="Marimuthu A."/>
            <person name="Anand S."/>
            <person name="Sundaram H."/>
            <person name="Kingsbury R."/>
            <person name="Harsha H.C."/>
            <person name="Nair B."/>
            <person name="Prasad T.S."/>
            <person name="Chauhan D.S."/>
            <person name="Katoch K."/>
            <person name="Katoch V.M."/>
            <person name="Kumar P."/>
            <person name="Chaerkady R."/>
            <person name="Ramachandran S."/>
            <person name="Dash D."/>
            <person name="Pandey A."/>
        </authorList>
    </citation>
    <scope>IDENTIFICATION BY MASS SPECTROMETRY [LARGE SCALE ANALYSIS]</scope>
    <source>
        <strain>ATCC 25618 / H37Rv</strain>
    </source>
</reference>